<sequence length="445" mass="50727">MDLELDEYYNKTLATENNTAATRNSDFPVWDDYKSSVDDLQYFLIGLYTFVSLLGFMGNLLILMALMKKRNQKTTVNFLIGNLAFSDILVVLFCSPFTLTSVLLDQWMFGKVMCHIMPFLQCVSVLVSTLILISIAIVRYHMIKHPISNNLTANHGYFLIATVWTLGFAICSPLPVFHSLVELQETFGSALLSSRYLCVESWPSDSYRIAFTISLLLVQYILPLVCLTVSHTSVCRSISCGLSNKENRLEENEMINLTLHPSKKSGPQVKLSGSHKWSYSFIKKHRRRYSKKTACVLPAPERPSQENHSRILPENFGSVRSQLSSSSKFIPGVPTCFEIKPEENSDVHELRVKRSVTRIKKRSRSVFYRLTILILVFAVSWMPLHLFHVVTDFNDNLISNRHFKLVYCICHLLGMMSCCLNPILYGFLNNGIKADLVSLIHCLHM</sequence>
<accession>Q15761</accession>
<accession>Q6GTR7</accession>
<accession>Q92916</accession>
<keyword id="KW-1003">Cell membrane</keyword>
<keyword id="KW-1015">Disulfide bond</keyword>
<keyword id="KW-0297">G-protein coupled receptor</keyword>
<keyword id="KW-0325">Glycoprotein</keyword>
<keyword id="KW-0449">Lipoprotein</keyword>
<keyword id="KW-0472">Membrane</keyword>
<keyword id="KW-0564">Palmitate</keyword>
<keyword id="KW-0675">Receptor</keyword>
<keyword id="KW-1185">Reference proteome</keyword>
<keyword id="KW-0807">Transducer</keyword>
<keyword id="KW-0812">Transmembrane</keyword>
<keyword id="KW-1133">Transmembrane helix</keyword>
<gene>
    <name type="primary">NPY5R</name>
    <name type="synonym">NPYR5</name>
</gene>
<comment type="function">
    <text>Receptor for neuropeptide Y and peptide YY. The activity of this receptor is mediated by G proteins that inhibit adenylate cyclase activity. Seems to be associated with food intake. Could be involved in feeding disorders.</text>
</comment>
<comment type="subcellular location">
    <subcellularLocation>
        <location>Cell membrane</location>
        <topology>Multi-pass membrane protein</topology>
    </subcellularLocation>
</comment>
<comment type="tissue specificity">
    <text>Brain; hypothalamus.</text>
</comment>
<comment type="similarity">
    <text evidence="2">Belongs to the G-protein coupled receptor 1 family.</text>
</comment>
<comment type="sequence caution" evidence="3">
    <conflict type="erroneous initiation">
        <sequence resource="EMBL-CDS" id="AAC50623"/>
    </conflict>
</comment>
<dbReference type="EMBL" id="U66275">
    <property type="protein sequence ID" value="AAC50741.1"/>
    <property type="molecule type" value="mRNA"/>
</dbReference>
<dbReference type="EMBL" id="U56079">
    <property type="protein sequence ID" value="AAC50623.1"/>
    <property type="status" value="ALT_INIT"/>
    <property type="molecule type" value="mRNA"/>
</dbReference>
<dbReference type="EMBL" id="U94320">
    <property type="protein sequence ID" value="AAC51295.1"/>
    <property type="molecule type" value="mRNA"/>
</dbReference>
<dbReference type="EMBL" id="AY322538">
    <property type="protein sequence ID" value="AAP84351.1"/>
    <property type="molecule type" value="Genomic_DNA"/>
</dbReference>
<dbReference type="EMBL" id="AC079238">
    <property type="status" value="NOT_ANNOTATED_CDS"/>
    <property type="molecule type" value="Genomic_DNA"/>
</dbReference>
<dbReference type="EMBL" id="CH471056">
    <property type="protein sequence ID" value="EAX04839.1"/>
    <property type="molecule type" value="Genomic_DNA"/>
</dbReference>
<dbReference type="EMBL" id="BC042416">
    <property type="protein sequence ID" value="AAH42416.1"/>
    <property type="molecule type" value="mRNA"/>
</dbReference>
<dbReference type="CCDS" id="CCDS3804.1"/>
<dbReference type="RefSeq" id="NP_001304020.1">
    <property type="nucleotide sequence ID" value="NM_001317091.2"/>
</dbReference>
<dbReference type="RefSeq" id="NP_001304021.1">
    <property type="nucleotide sequence ID" value="NM_001317092.2"/>
</dbReference>
<dbReference type="RefSeq" id="NP_006165.1">
    <property type="nucleotide sequence ID" value="NM_006174.4"/>
</dbReference>
<dbReference type="RefSeq" id="XP_005263095.1">
    <property type="nucleotide sequence ID" value="XM_005263038.4"/>
</dbReference>
<dbReference type="RefSeq" id="XP_011530319.1">
    <property type="nucleotide sequence ID" value="XM_011532017.3"/>
</dbReference>
<dbReference type="RefSeq" id="XP_054206100.1">
    <property type="nucleotide sequence ID" value="XM_054350125.1"/>
</dbReference>
<dbReference type="RefSeq" id="XP_054206101.1">
    <property type="nucleotide sequence ID" value="XM_054350126.1"/>
</dbReference>
<dbReference type="BMRB" id="Q15761"/>
<dbReference type="SMR" id="Q15761"/>
<dbReference type="BioGRID" id="110949">
    <property type="interactions" value="2"/>
</dbReference>
<dbReference type="FunCoup" id="Q15761">
    <property type="interactions" value="752"/>
</dbReference>
<dbReference type="IntAct" id="Q15761">
    <property type="interactions" value="3"/>
</dbReference>
<dbReference type="STRING" id="9606.ENSP00000423917"/>
<dbReference type="BindingDB" id="Q15761"/>
<dbReference type="ChEMBL" id="CHEMBL4561"/>
<dbReference type="DrugBank" id="DB05004">
    <property type="generic name" value="Peptide YY (3-36)"/>
</dbReference>
<dbReference type="DrugBank" id="DB12889">
    <property type="generic name" value="Velneperit"/>
</dbReference>
<dbReference type="GuidetoPHARMACOLOGY" id="308"/>
<dbReference type="GlyCosmos" id="Q15761">
    <property type="glycosylation" value="2 sites, No reported glycans"/>
</dbReference>
<dbReference type="GlyGen" id="Q15761">
    <property type="glycosylation" value="2 sites"/>
</dbReference>
<dbReference type="iPTMnet" id="Q15761"/>
<dbReference type="PhosphoSitePlus" id="Q15761"/>
<dbReference type="BioMuta" id="NPY5R"/>
<dbReference type="DMDM" id="215274093"/>
<dbReference type="PaxDb" id="9606-ENSP00000423917"/>
<dbReference type="PeptideAtlas" id="Q15761"/>
<dbReference type="Antibodypedia" id="2946">
    <property type="antibodies" value="278 antibodies from 34 providers"/>
</dbReference>
<dbReference type="DNASU" id="4889"/>
<dbReference type="Ensembl" id="ENST00000338566.8">
    <property type="protein sequence ID" value="ENSP00000339377.3"/>
    <property type="gene ID" value="ENSG00000164129.12"/>
</dbReference>
<dbReference type="Ensembl" id="ENST00000506953.1">
    <property type="protein sequence ID" value="ENSP00000423474.1"/>
    <property type="gene ID" value="ENSG00000164129.12"/>
</dbReference>
<dbReference type="Ensembl" id="ENST00000515560.1">
    <property type="protein sequence ID" value="ENSP00000423917.1"/>
    <property type="gene ID" value="ENSG00000164129.12"/>
</dbReference>
<dbReference type="GeneID" id="4889"/>
<dbReference type="KEGG" id="hsa:4889"/>
<dbReference type="MANE-Select" id="ENST00000338566.8">
    <property type="protein sequence ID" value="ENSP00000339377.3"/>
    <property type="RefSeq nucleotide sequence ID" value="NM_006174.4"/>
    <property type="RefSeq protein sequence ID" value="NP_006165.1"/>
</dbReference>
<dbReference type="UCSC" id="uc003iqn.3">
    <property type="organism name" value="human"/>
</dbReference>
<dbReference type="AGR" id="HGNC:7958"/>
<dbReference type="CTD" id="4889"/>
<dbReference type="DisGeNET" id="4889"/>
<dbReference type="GeneCards" id="NPY5R"/>
<dbReference type="HGNC" id="HGNC:7958">
    <property type="gene designation" value="NPY5R"/>
</dbReference>
<dbReference type="HPA" id="ENSG00000164129">
    <property type="expression patterns" value="Tissue enhanced (adipose tissue, lymphoid tissue)"/>
</dbReference>
<dbReference type="MIM" id="602001">
    <property type="type" value="gene"/>
</dbReference>
<dbReference type="neXtProt" id="NX_Q15761"/>
<dbReference type="OpenTargets" id="ENSG00000164129"/>
<dbReference type="PharmGKB" id="PA31742"/>
<dbReference type="VEuPathDB" id="HostDB:ENSG00000164129"/>
<dbReference type="eggNOG" id="KOG3656">
    <property type="taxonomic scope" value="Eukaryota"/>
</dbReference>
<dbReference type="GeneTree" id="ENSGT00940000161766"/>
<dbReference type="HOGENOM" id="CLU_009579_6_1_1"/>
<dbReference type="InParanoid" id="Q15761"/>
<dbReference type="OMA" id="RHHQDTH"/>
<dbReference type="OrthoDB" id="5981855at2759"/>
<dbReference type="PAN-GO" id="Q15761">
    <property type="GO annotations" value="7 GO annotations based on evolutionary models"/>
</dbReference>
<dbReference type="PhylomeDB" id="Q15761"/>
<dbReference type="TreeFam" id="TF315303"/>
<dbReference type="PathwayCommons" id="Q15761"/>
<dbReference type="Reactome" id="R-HSA-375276">
    <property type="pathway name" value="Peptide ligand-binding receptors"/>
</dbReference>
<dbReference type="Reactome" id="R-HSA-418594">
    <property type="pathway name" value="G alpha (i) signalling events"/>
</dbReference>
<dbReference type="SignaLink" id="Q15761"/>
<dbReference type="SIGNOR" id="Q15761"/>
<dbReference type="BioGRID-ORCS" id="4889">
    <property type="hits" value="8 hits in 1135 CRISPR screens"/>
</dbReference>
<dbReference type="GeneWiki" id="Neuropeptide_Y_receptor_Y5"/>
<dbReference type="GenomeRNAi" id="4889"/>
<dbReference type="Pharos" id="Q15761">
    <property type="development level" value="Tchem"/>
</dbReference>
<dbReference type="PRO" id="PR:Q15761"/>
<dbReference type="Proteomes" id="UP000005640">
    <property type="component" value="Chromosome 4"/>
</dbReference>
<dbReference type="RNAct" id="Q15761">
    <property type="molecule type" value="protein"/>
</dbReference>
<dbReference type="Bgee" id="ENSG00000164129">
    <property type="expression patterns" value="Expressed in male germ line stem cell (sensu Vertebrata) in testis and 100 other cell types or tissues"/>
</dbReference>
<dbReference type="GO" id="GO:0098982">
    <property type="term" value="C:GABA-ergic synapse"/>
    <property type="evidence" value="ECO:0007669"/>
    <property type="project" value="Ensembl"/>
</dbReference>
<dbReference type="GO" id="GO:0043005">
    <property type="term" value="C:neuron projection"/>
    <property type="evidence" value="ECO:0000318"/>
    <property type="project" value="GO_Central"/>
</dbReference>
<dbReference type="GO" id="GO:0005886">
    <property type="term" value="C:plasma membrane"/>
    <property type="evidence" value="ECO:0000318"/>
    <property type="project" value="GO_Central"/>
</dbReference>
<dbReference type="GO" id="GO:0098793">
    <property type="term" value="C:presynapse"/>
    <property type="evidence" value="ECO:0007669"/>
    <property type="project" value="Ensembl"/>
</dbReference>
<dbReference type="GO" id="GO:0042923">
    <property type="term" value="F:neuropeptide binding"/>
    <property type="evidence" value="ECO:0000318"/>
    <property type="project" value="GO_Central"/>
</dbReference>
<dbReference type="GO" id="GO:0004983">
    <property type="term" value="F:neuropeptide Y receptor activity"/>
    <property type="evidence" value="ECO:0000304"/>
    <property type="project" value="ProtInc"/>
</dbReference>
<dbReference type="GO" id="GO:0001602">
    <property type="term" value="F:pancreatic polypeptide receptor activity"/>
    <property type="evidence" value="ECO:0000318"/>
    <property type="project" value="GO_Central"/>
</dbReference>
<dbReference type="GO" id="GO:0001601">
    <property type="term" value="F:peptide YY receptor activity"/>
    <property type="evidence" value="ECO:0000318"/>
    <property type="project" value="GO_Central"/>
</dbReference>
<dbReference type="GO" id="GO:0003214">
    <property type="term" value="P:cardiac left ventricle morphogenesis"/>
    <property type="evidence" value="ECO:0000315"/>
    <property type="project" value="BHF-UCL"/>
</dbReference>
<dbReference type="GO" id="GO:0007268">
    <property type="term" value="P:chemical synaptic transmission"/>
    <property type="evidence" value="ECO:0000318"/>
    <property type="project" value="GO_Central"/>
</dbReference>
<dbReference type="GO" id="GO:0042755">
    <property type="term" value="P:eating behavior"/>
    <property type="evidence" value="ECO:0007669"/>
    <property type="project" value="Ensembl"/>
</dbReference>
<dbReference type="GO" id="GO:0007186">
    <property type="term" value="P:G protein-coupled receptor signaling pathway"/>
    <property type="evidence" value="ECO:0000318"/>
    <property type="project" value="GO_Central"/>
</dbReference>
<dbReference type="GO" id="GO:0060112">
    <property type="term" value="P:generation of ovulation cycle rhythm"/>
    <property type="evidence" value="ECO:0007669"/>
    <property type="project" value="Ensembl"/>
</dbReference>
<dbReference type="GO" id="GO:0002865">
    <property type="term" value="P:negative regulation of acute inflammatory response to antigenic stimulus"/>
    <property type="evidence" value="ECO:0007669"/>
    <property type="project" value="Ensembl"/>
</dbReference>
<dbReference type="GO" id="GO:0043066">
    <property type="term" value="P:negative regulation of apoptotic process"/>
    <property type="evidence" value="ECO:0007669"/>
    <property type="project" value="Ensembl"/>
</dbReference>
<dbReference type="GO" id="GO:0014050">
    <property type="term" value="P:negative regulation of glutamate secretion"/>
    <property type="evidence" value="ECO:0007669"/>
    <property type="project" value="Ensembl"/>
</dbReference>
<dbReference type="GO" id="GO:0032229">
    <property type="term" value="P:negative regulation of synaptic transmission, GABAergic"/>
    <property type="evidence" value="ECO:0007669"/>
    <property type="project" value="Ensembl"/>
</dbReference>
<dbReference type="GO" id="GO:0003151">
    <property type="term" value="P:outflow tract morphogenesis"/>
    <property type="evidence" value="ECO:0000315"/>
    <property type="project" value="BHF-UCL"/>
</dbReference>
<dbReference type="GO" id="GO:0002675">
    <property type="term" value="P:positive regulation of acute inflammatory response"/>
    <property type="evidence" value="ECO:0007669"/>
    <property type="project" value="Ensembl"/>
</dbReference>
<dbReference type="GO" id="GO:0070374">
    <property type="term" value="P:positive regulation of ERK1 and ERK2 cascade"/>
    <property type="evidence" value="ECO:0007669"/>
    <property type="project" value="Ensembl"/>
</dbReference>
<dbReference type="GO" id="GO:0048661">
    <property type="term" value="P:positive regulation of smooth muscle cell proliferation"/>
    <property type="evidence" value="ECO:0007669"/>
    <property type="project" value="Ensembl"/>
</dbReference>
<dbReference type="GO" id="GO:0099538">
    <property type="term" value="P:synaptic signaling via neuropeptide"/>
    <property type="evidence" value="ECO:0007669"/>
    <property type="project" value="Ensembl"/>
</dbReference>
<dbReference type="CDD" id="cd15398">
    <property type="entry name" value="7tmA_NPY5R"/>
    <property type="match status" value="1"/>
</dbReference>
<dbReference type="Gene3D" id="1.20.1070.10">
    <property type="entry name" value="Rhodopsin 7-helix transmembrane proteins"/>
    <property type="match status" value="1"/>
</dbReference>
<dbReference type="InterPro" id="IPR000276">
    <property type="entry name" value="GPCR_Rhodpsn"/>
</dbReference>
<dbReference type="InterPro" id="IPR017452">
    <property type="entry name" value="GPCR_Rhodpsn_7TM"/>
</dbReference>
<dbReference type="InterPro" id="IPR000393">
    <property type="entry name" value="NPY5_rcpt"/>
</dbReference>
<dbReference type="InterPro" id="IPR000611">
    <property type="entry name" value="NPY_rcpt"/>
</dbReference>
<dbReference type="PANTHER" id="PTHR24235">
    <property type="entry name" value="NEUROPEPTIDE Y RECEPTOR"/>
    <property type="match status" value="1"/>
</dbReference>
<dbReference type="PANTHER" id="PTHR24235:SF10">
    <property type="entry name" value="NEUROPEPTIDE Y RECEPTOR TYPE 5"/>
    <property type="match status" value="1"/>
</dbReference>
<dbReference type="Pfam" id="PF00001">
    <property type="entry name" value="7tm_1"/>
    <property type="match status" value="1"/>
</dbReference>
<dbReference type="PRINTS" id="PR00237">
    <property type="entry name" value="GPCRRHODOPSN"/>
</dbReference>
<dbReference type="PRINTS" id="PR01016">
    <property type="entry name" value="NRPEPTIDEY5R"/>
</dbReference>
<dbReference type="PRINTS" id="PR01012">
    <property type="entry name" value="NRPEPTIDEYR"/>
</dbReference>
<dbReference type="SMART" id="SM01381">
    <property type="entry name" value="7TM_GPCR_Srsx"/>
    <property type="match status" value="1"/>
</dbReference>
<dbReference type="SUPFAM" id="SSF81321">
    <property type="entry name" value="Family A G protein-coupled receptor-like"/>
    <property type="match status" value="1"/>
</dbReference>
<dbReference type="PROSITE" id="PS50262">
    <property type="entry name" value="G_PROTEIN_RECEP_F1_2"/>
    <property type="match status" value="1"/>
</dbReference>
<organism>
    <name type="scientific">Homo sapiens</name>
    <name type="common">Human</name>
    <dbReference type="NCBI Taxonomy" id="9606"/>
    <lineage>
        <taxon>Eukaryota</taxon>
        <taxon>Metazoa</taxon>
        <taxon>Chordata</taxon>
        <taxon>Craniata</taxon>
        <taxon>Vertebrata</taxon>
        <taxon>Euteleostomi</taxon>
        <taxon>Mammalia</taxon>
        <taxon>Eutheria</taxon>
        <taxon>Euarchontoglires</taxon>
        <taxon>Primates</taxon>
        <taxon>Haplorrhini</taxon>
        <taxon>Catarrhini</taxon>
        <taxon>Hominidae</taxon>
        <taxon>Homo</taxon>
    </lineage>
</organism>
<protein>
    <recommendedName>
        <fullName>Neuropeptide Y receptor type 5</fullName>
        <shortName>NPY5-R</shortName>
    </recommendedName>
    <alternativeName>
        <fullName>NPY-Y5 receptor</fullName>
        <shortName>NPYY5-R</shortName>
        <shortName>Y5 receptor</shortName>
    </alternativeName>
</protein>
<name>NPY5R_HUMAN</name>
<proteinExistence type="evidence at transcript level"/>
<reference key="1">
    <citation type="journal article" date="1996" name="J. Biol. Chem.">
        <title>Identification of a novel hypothalamic neuropeptide Y receptor associated with feeding behavior.</title>
        <authorList>
            <person name="Hu Y."/>
            <person name="Bloomquist B.T."/>
            <person name="Cornfield L.J."/>
            <person name="Decarr L.B."/>
            <person name="Flores-Riveros J.R."/>
            <person name="Friedman L."/>
            <person name="Jiang P."/>
            <person name="Lewis-Higgins L."/>
            <person name="Sadlowski Y."/>
            <person name="Schaefer J."/>
            <person name="Velazquez N."/>
            <person name="McCaleb M.L."/>
        </authorList>
    </citation>
    <scope>NUCLEOTIDE SEQUENCE [MRNA]</scope>
</reference>
<reference key="2">
    <citation type="journal article" date="1996" name="Nature">
        <title>A receptor subtype involved in neuropeptide-Y-induced food intake.</title>
        <authorList>
            <person name="Gerald C."/>
            <person name="Walker M.W."/>
            <person name="Criscione L."/>
            <person name="Gustafson E.L."/>
            <person name="Batzl-Hartmann C."/>
            <person name="Smith K.E."/>
            <person name="Vaysse P."/>
            <person name="Durkin M.M."/>
            <person name="Laz T.M."/>
            <person name="Linemeyer D.L."/>
            <person name="Schaffhauser A.O."/>
            <person name="Whitebread S."/>
            <person name="Hofbauer K.G."/>
            <person name="Taber R.I."/>
            <person name="Branchek T.A."/>
            <person name="Weinshank R.L."/>
        </authorList>
    </citation>
    <scope>NUCLEOTIDE SEQUENCE [MRNA]</scope>
    <source>
        <tissue>Hippocampus</tissue>
    </source>
</reference>
<reference key="3">
    <citation type="journal article" date="1997" name="Genomics">
        <title>Overlapping gene structure of the human neuropeptide Y receptor subtypes Y1 and Y5 suggests coordinate transcriptional regulation.</title>
        <authorList>
            <person name="Herzog H."/>
            <person name="Darby K."/>
            <person name="Ball H."/>
            <person name="Hort Y."/>
            <person name="Beck-Sickinger A."/>
            <person name="Shine J."/>
        </authorList>
    </citation>
    <scope>NUCLEOTIDE SEQUENCE [MRNA]</scope>
</reference>
<reference key="4">
    <citation type="submission" date="2003-06" db="EMBL/GenBank/DDBJ databases">
        <title>Isolation of complete coding sequence for neuropeptide Y receptor Y5 (NPY5R).</title>
        <authorList>
            <person name="Kopatz S.A."/>
            <person name="Aronstam R.S."/>
            <person name="Sharma S.V."/>
        </authorList>
    </citation>
    <scope>NUCLEOTIDE SEQUENCE [GENOMIC DNA]</scope>
</reference>
<reference key="5">
    <citation type="journal article" date="2005" name="Nature">
        <title>Generation and annotation of the DNA sequences of human chromosomes 2 and 4.</title>
        <authorList>
            <person name="Hillier L.W."/>
            <person name="Graves T.A."/>
            <person name="Fulton R.S."/>
            <person name="Fulton L.A."/>
            <person name="Pepin K.H."/>
            <person name="Minx P."/>
            <person name="Wagner-McPherson C."/>
            <person name="Layman D."/>
            <person name="Wylie K."/>
            <person name="Sekhon M."/>
            <person name="Becker M.C."/>
            <person name="Fewell G.A."/>
            <person name="Delehaunty K.D."/>
            <person name="Miner T.L."/>
            <person name="Nash W.E."/>
            <person name="Kremitzki C."/>
            <person name="Oddy L."/>
            <person name="Du H."/>
            <person name="Sun H."/>
            <person name="Bradshaw-Cordum H."/>
            <person name="Ali J."/>
            <person name="Carter J."/>
            <person name="Cordes M."/>
            <person name="Harris A."/>
            <person name="Isak A."/>
            <person name="van Brunt A."/>
            <person name="Nguyen C."/>
            <person name="Du F."/>
            <person name="Courtney L."/>
            <person name="Kalicki J."/>
            <person name="Ozersky P."/>
            <person name="Abbott S."/>
            <person name="Armstrong J."/>
            <person name="Belter E.A."/>
            <person name="Caruso L."/>
            <person name="Cedroni M."/>
            <person name="Cotton M."/>
            <person name="Davidson T."/>
            <person name="Desai A."/>
            <person name="Elliott G."/>
            <person name="Erb T."/>
            <person name="Fronick C."/>
            <person name="Gaige T."/>
            <person name="Haakenson W."/>
            <person name="Haglund K."/>
            <person name="Holmes A."/>
            <person name="Harkins R."/>
            <person name="Kim K."/>
            <person name="Kruchowski S.S."/>
            <person name="Strong C.M."/>
            <person name="Grewal N."/>
            <person name="Goyea E."/>
            <person name="Hou S."/>
            <person name="Levy A."/>
            <person name="Martinka S."/>
            <person name="Mead K."/>
            <person name="McLellan M.D."/>
            <person name="Meyer R."/>
            <person name="Randall-Maher J."/>
            <person name="Tomlinson C."/>
            <person name="Dauphin-Kohlberg S."/>
            <person name="Kozlowicz-Reilly A."/>
            <person name="Shah N."/>
            <person name="Swearengen-Shahid S."/>
            <person name="Snider J."/>
            <person name="Strong J.T."/>
            <person name="Thompson J."/>
            <person name="Yoakum M."/>
            <person name="Leonard S."/>
            <person name="Pearman C."/>
            <person name="Trani L."/>
            <person name="Radionenko M."/>
            <person name="Waligorski J.E."/>
            <person name="Wang C."/>
            <person name="Rock S.M."/>
            <person name="Tin-Wollam A.-M."/>
            <person name="Maupin R."/>
            <person name="Latreille P."/>
            <person name="Wendl M.C."/>
            <person name="Yang S.-P."/>
            <person name="Pohl C."/>
            <person name="Wallis J.W."/>
            <person name="Spieth J."/>
            <person name="Bieri T.A."/>
            <person name="Berkowicz N."/>
            <person name="Nelson J.O."/>
            <person name="Osborne J."/>
            <person name="Ding L."/>
            <person name="Meyer R."/>
            <person name="Sabo A."/>
            <person name="Shotland Y."/>
            <person name="Sinha P."/>
            <person name="Wohldmann P.E."/>
            <person name="Cook L.L."/>
            <person name="Hickenbotham M.T."/>
            <person name="Eldred J."/>
            <person name="Williams D."/>
            <person name="Jones T.A."/>
            <person name="She X."/>
            <person name="Ciccarelli F.D."/>
            <person name="Izaurralde E."/>
            <person name="Taylor J."/>
            <person name="Schmutz J."/>
            <person name="Myers R.M."/>
            <person name="Cox D.R."/>
            <person name="Huang X."/>
            <person name="McPherson J.D."/>
            <person name="Mardis E.R."/>
            <person name="Clifton S.W."/>
            <person name="Warren W.C."/>
            <person name="Chinwalla A.T."/>
            <person name="Eddy S.R."/>
            <person name="Marra M.A."/>
            <person name="Ovcharenko I."/>
            <person name="Furey T.S."/>
            <person name="Miller W."/>
            <person name="Eichler E.E."/>
            <person name="Bork P."/>
            <person name="Suyama M."/>
            <person name="Torrents D."/>
            <person name="Waterston R.H."/>
            <person name="Wilson R.K."/>
        </authorList>
    </citation>
    <scope>NUCLEOTIDE SEQUENCE [LARGE SCALE GENOMIC DNA]</scope>
</reference>
<reference key="6">
    <citation type="submission" date="2005-09" db="EMBL/GenBank/DDBJ databases">
        <authorList>
            <person name="Mural R.J."/>
            <person name="Istrail S."/>
            <person name="Sutton G.G."/>
            <person name="Florea L."/>
            <person name="Halpern A.L."/>
            <person name="Mobarry C.M."/>
            <person name="Lippert R."/>
            <person name="Walenz B."/>
            <person name="Shatkay H."/>
            <person name="Dew I."/>
            <person name="Miller J.R."/>
            <person name="Flanigan M.J."/>
            <person name="Edwards N.J."/>
            <person name="Bolanos R."/>
            <person name="Fasulo D."/>
            <person name="Halldorsson B.V."/>
            <person name="Hannenhalli S."/>
            <person name="Turner R."/>
            <person name="Yooseph S."/>
            <person name="Lu F."/>
            <person name="Nusskern D.R."/>
            <person name="Shue B.C."/>
            <person name="Zheng X.H."/>
            <person name="Zhong F."/>
            <person name="Delcher A.L."/>
            <person name="Huson D.H."/>
            <person name="Kravitz S.A."/>
            <person name="Mouchard L."/>
            <person name="Reinert K."/>
            <person name="Remington K.A."/>
            <person name="Clark A.G."/>
            <person name="Waterman M.S."/>
            <person name="Eichler E.E."/>
            <person name="Adams M.D."/>
            <person name="Hunkapiller M.W."/>
            <person name="Myers E.W."/>
            <person name="Venter J.C."/>
        </authorList>
    </citation>
    <scope>NUCLEOTIDE SEQUENCE [LARGE SCALE GENOMIC DNA]</scope>
</reference>
<reference key="7">
    <citation type="journal article" date="2004" name="Genome Res.">
        <title>The status, quality, and expansion of the NIH full-length cDNA project: the Mammalian Gene Collection (MGC).</title>
        <authorList>
            <consortium name="The MGC Project Team"/>
        </authorList>
    </citation>
    <scope>NUCLEOTIDE SEQUENCE [LARGE SCALE MRNA]</scope>
    <source>
        <tissue>Brain</tissue>
    </source>
</reference>
<feature type="chain" id="PRO_0000069939" description="Neuropeptide Y receptor type 5">
    <location>
        <begin position="1"/>
        <end position="445"/>
    </location>
</feature>
<feature type="topological domain" description="Extracellular" evidence="1">
    <location>
        <begin position="1"/>
        <end position="42"/>
    </location>
</feature>
<feature type="transmembrane region" description="Helical; Name=1" evidence="1">
    <location>
        <begin position="43"/>
        <end position="63"/>
    </location>
</feature>
<feature type="topological domain" description="Cytoplasmic" evidence="1">
    <location>
        <begin position="64"/>
        <end position="77"/>
    </location>
</feature>
<feature type="transmembrane region" description="Helical; Name=2" evidence="1">
    <location>
        <begin position="78"/>
        <end position="98"/>
    </location>
</feature>
<feature type="topological domain" description="Extracellular" evidence="1">
    <location>
        <begin position="99"/>
        <end position="117"/>
    </location>
</feature>
<feature type="transmembrane region" description="Helical; Name=3" evidence="1">
    <location>
        <begin position="118"/>
        <end position="138"/>
    </location>
</feature>
<feature type="topological domain" description="Cytoplasmic" evidence="1">
    <location>
        <begin position="139"/>
        <end position="156"/>
    </location>
</feature>
<feature type="transmembrane region" description="Helical; Name=4" evidence="1">
    <location>
        <begin position="157"/>
        <end position="177"/>
    </location>
</feature>
<feature type="topological domain" description="Extracellular" evidence="1">
    <location>
        <begin position="178"/>
        <end position="208"/>
    </location>
</feature>
<feature type="transmembrane region" description="Helical; Name=5" evidence="1">
    <location>
        <begin position="209"/>
        <end position="229"/>
    </location>
</feature>
<feature type="topological domain" description="Cytoplasmic" evidence="1">
    <location>
        <begin position="230"/>
        <end position="369"/>
    </location>
</feature>
<feature type="transmembrane region" description="Helical; Name=6" evidence="1">
    <location>
        <begin position="370"/>
        <end position="390"/>
    </location>
</feature>
<feature type="topological domain" description="Extracellular" evidence="1">
    <location>
        <begin position="391"/>
        <end position="407"/>
    </location>
</feature>
<feature type="transmembrane region" description="Helical; Name=7" evidence="1">
    <location>
        <begin position="408"/>
        <end position="428"/>
    </location>
</feature>
<feature type="topological domain" description="Cytoplasmic" evidence="1">
    <location>
        <begin position="429"/>
        <end position="445"/>
    </location>
</feature>
<feature type="lipid moiety-binding region" description="S-palmitoyl cysteine" evidence="1">
    <location>
        <position position="442"/>
    </location>
</feature>
<feature type="glycosylation site" description="N-linked (GlcNAc...) asparagine" evidence="1">
    <location>
        <position position="10"/>
    </location>
</feature>
<feature type="glycosylation site" description="N-linked (GlcNAc...) asparagine" evidence="1">
    <location>
        <position position="17"/>
    </location>
</feature>
<feature type="disulfide bond" evidence="2">
    <location>
        <begin position="114"/>
        <end position="198"/>
    </location>
</feature>
<evidence type="ECO:0000255" key="1"/>
<evidence type="ECO:0000255" key="2">
    <source>
        <dbReference type="PROSITE-ProRule" id="PRU00521"/>
    </source>
</evidence>
<evidence type="ECO:0000305" key="3"/>